<dbReference type="EC" id="2.7.4.6" evidence="1"/>
<dbReference type="EMBL" id="CR931997">
    <property type="protein sequence ID" value="CAI36713.1"/>
    <property type="molecule type" value="Genomic_DNA"/>
</dbReference>
<dbReference type="RefSeq" id="WP_005296491.1">
    <property type="nucleotide sequence ID" value="NC_007164.1"/>
</dbReference>
<dbReference type="SMR" id="Q4JWU4"/>
<dbReference type="STRING" id="306537.jk0554"/>
<dbReference type="GeneID" id="92738057"/>
<dbReference type="KEGG" id="cjk:jk0554"/>
<dbReference type="eggNOG" id="COG0105">
    <property type="taxonomic scope" value="Bacteria"/>
</dbReference>
<dbReference type="HOGENOM" id="CLU_060216_6_3_11"/>
<dbReference type="OrthoDB" id="9801161at2"/>
<dbReference type="Proteomes" id="UP000000545">
    <property type="component" value="Chromosome"/>
</dbReference>
<dbReference type="GO" id="GO:0005737">
    <property type="term" value="C:cytoplasm"/>
    <property type="evidence" value="ECO:0007669"/>
    <property type="project" value="UniProtKB-SubCell"/>
</dbReference>
<dbReference type="GO" id="GO:0005524">
    <property type="term" value="F:ATP binding"/>
    <property type="evidence" value="ECO:0007669"/>
    <property type="project" value="UniProtKB-UniRule"/>
</dbReference>
<dbReference type="GO" id="GO:0046872">
    <property type="term" value="F:metal ion binding"/>
    <property type="evidence" value="ECO:0007669"/>
    <property type="project" value="UniProtKB-KW"/>
</dbReference>
<dbReference type="GO" id="GO:0004550">
    <property type="term" value="F:nucleoside diphosphate kinase activity"/>
    <property type="evidence" value="ECO:0007669"/>
    <property type="project" value="UniProtKB-UniRule"/>
</dbReference>
<dbReference type="GO" id="GO:0006241">
    <property type="term" value="P:CTP biosynthetic process"/>
    <property type="evidence" value="ECO:0007669"/>
    <property type="project" value="UniProtKB-UniRule"/>
</dbReference>
<dbReference type="GO" id="GO:0006183">
    <property type="term" value="P:GTP biosynthetic process"/>
    <property type="evidence" value="ECO:0007669"/>
    <property type="project" value="UniProtKB-UniRule"/>
</dbReference>
<dbReference type="GO" id="GO:0006228">
    <property type="term" value="P:UTP biosynthetic process"/>
    <property type="evidence" value="ECO:0007669"/>
    <property type="project" value="UniProtKB-UniRule"/>
</dbReference>
<dbReference type="CDD" id="cd04413">
    <property type="entry name" value="NDPk_I"/>
    <property type="match status" value="1"/>
</dbReference>
<dbReference type="FunFam" id="3.30.70.141:FF:000003">
    <property type="entry name" value="Nucleoside diphosphate kinase"/>
    <property type="match status" value="1"/>
</dbReference>
<dbReference type="Gene3D" id="3.30.70.141">
    <property type="entry name" value="Nucleoside diphosphate kinase-like domain"/>
    <property type="match status" value="1"/>
</dbReference>
<dbReference type="HAMAP" id="MF_00451">
    <property type="entry name" value="NDP_kinase"/>
    <property type="match status" value="1"/>
</dbReference>
<dbReference type="InterPro" id="IPR034907">
    <property type="entry name" value="NDK-like_dom"/>
</dbReference>
<dbReference type="InterPro" id="IPR036850">
    <property type="entry name" value="NDK-like_dom_sf"/>
</dbReference>
<dbReference type="InterPro" id="IPR001564">
    <property type="entry name" value="Nucleoside_diP_kinase"/>
</dbReference>
<dbReference type="InterPro" id="IPR023005">
    <property type="entry name" value="Nucleoside_diP_kinase_AS"/>
</dbReference>
<dbReference type="NCBIfam" id="NF001908">
    <property type="entry name" value="PRK00668.1"/>
    <property type="match status" value="1"/>
</dbReference>
<dbReference type="PANTHER" id="PTHR11349">
    <property type="entry name" value="NUCLEOSIDE DIPHOSPHATE KINASE"/>
    <property type="match status" value="1"/>
</dbReference>
<dbReference type="Pfam" id="PF00334">
    <property type="entry name" value="NDK"/>
    <property type="match status" value="1"/>
</dbReference>
<dbReference type="PRINTS" id="PR01243">
    <property type="entry name" value="NUCDPKINASE"/>
</dbReference>
<dbReference type="SMART" id="SM00562">
    <property type="entry name" value="NDK"/>
    <property type="match status" value="1"/>
</dbReference>
<dbReference type="SUPFAM" id="SSF54919">
    <property type="entry name" value="Nucleoside diphosphate kinase, NDK"/>
    <property type="match status" value="1"/>
</dbReference>
<dbReference type="PROSITE" id="PS00469">
    <property type="entry name" value="NDPK"/>
    <property type="match status" value="1"/>
</dbReference>
<dbReference type="PROSITE" id="PS51374">
    <property type="entry name" value="NDPK_LIKE"/>
    <property type="match status" value="1"/>
</dbReference>
<feature type="chain" id="PRO_0000226556" description="Nucleoside diphosphate kinase">
    <location>
        <begin position="1"/>
        <end position="136"/>
    </location>
</feature>
<feature type="active site" description="Pros-phosphohistidine intermediate" evidence="1">
    <location>
        <position position="117"/>
    </location>
</feature>
<feature type="binding site" evidence="1">
    <location>
        <position position="10"/>
    </location>
    <ligand>
        <name>ATP</name>
        <dbReference type="ChEBI" id="CHEBI:30616"/>
    </ligand>
</feature>
<feature type="binding site" evidence="1">
    <location>
        <position position="58"/>
    </location>
    <ligand>
        <name>ATP</name>
        <dbReference type="ChEBI" id="CHEBI:30616"/>
    </ligand>
</feature>
<feature type="binding site" evidence="1">
    <location>
        <position position="86"/>
    </location>
    <ligand>
        <name>ATP</name>
        <dbReference type="ChEBI" id="CHEBI:30616"/>
    </ligand>
</feature>
<feature type="binding site" evidence="1">
    <location>
        <position position="92"/>
    </location>
    <ligand>
        <name>ATP</name>
        <dbReference type="ChEBI" id="CHEBI:30616"/>
    </ligand>
</feature>
<feature type="binding site" evidence="1">
    <location>
        <position position="104"/>
    </location>
    <ligand>
        <name>ATP</name>
        <dbReference type="ChEBI" id="CHEBI:30616"/>
    </ligand>
</feature>
<feature type="binding site" evidence="1">
    <location>
        <position position="114"/>
    </location>
    <ligand>
        <name>ATP</name>
        <dbReference type="ChEBI" id="CHEBI:30616"/>
    </ligand>
</feature>
<organism>
    <name type="scientific">Corynebacterium jeikeium (strain K411)</name>
    <dbReference type="NCBI Taxonomy" id="306537"/>
    <lineage>
        <taxon>Bacteria</taxon>
        <taxon>Bacillati</taxon>
        <taxon>Actinomycetota</taxon>
        <taxon>Actinomycetes</taxon>
        <taxon>Mycobacteriales</taxon>
        <taxon>Corynebacteriaceae</taxon>
        <taxon>Corynebacterium</taxon>
    </lineage>
</organism>
<comment type="function">
    <text evidence="1">Major role in the synthesis of nucleoside triphosphates other than ATP. The ATP gamma phosphate is transferred to the NDP beta phosphate via a ping-pong mechanism, using a phosphorylated active-site intermediate.</text>
</comment>
<comment type="catalytic activity">
    <reaction evidence="1">
        <text>a 2'-deoxyribonucleoside 5'-diphosphate + ATP = a 2'-deoxyribonucleoside 5'-triphosphate + ADP</text>
        <dbReference type="Rhea" id="RHEA:44640"/>
        <dbReference type="ChEBI" id="CHEBI:30616"/>
        <dbReference type="ChEBI" id="CHEBI:61560"/>
        <dbReference type="ChEBI" id="CHEBI:73316"/>
        <dbReference type="ChEBI" id="CHEBI:456216"/>
        <dbReference type="EC" id="2.7.4.6"/>
    </reaction>
</comment>
<comment type="catalytic activity">
    <reaction evidence="1">
        <text>a ribonucleoside 5'-diphosphate + ATP = a ribonucleoside 5'-triphosphate + ADP</text>
        <dbReference type="Rhea" id="RHEA:18113"/>
        <dbReference type="ChEBI" id="CHEBI:30616"/>
        <dbReference type="ChEBI" id="CHEBI:57930"/>
        <dbReference type="ChEBI" id="CHEBI:61557"/>
        <dbReference type="ChEBI" id="CHEBI:456216"/>
        <dbReference type="EC" id="2.7.4.6"/>
    </reaction>
</comment>
<comment type="cofactor">
    <cofactor evidence="1">
        <name>Mg(2+)</name>
        <dbReference type="ChEBI" id="CHEBI:18420"/>
    </cofactor>
</comment>
<comment type="subunit">
    <text evidence="1">Homotetramer.</text>
</comment>
<comment type="subcellular location">
    <subcellularLocation>
        <location evidence="1">Cytoplasm</location>
    </subcellularLocation>
</comment>
<comment type="similarity">
    <text evidence="1">Belongs to the NDK family.</text>
</comment>
<protein>
    <recommendedName>
        <fullName evidence="1">Nucleoside diphosphate kinase</fullName>
        <shortName evidence="1">NDK</shortName>
        <shortName evidence="1">NDP kinase</shortName>
        <ecNumber evidence="1">2.7.4.6</ecNumber>
    </recommendedName>
    <alternativeName>
        <fullName evidence="1">Nucleoside-2-P kinase</fullName>
    </alternativeName>
</protein>
<name>NDK_CORJK</name>
<sequence>MTERTLILIKPDGVKNGHVGEIISRIEKKGLKLVELDLRTADRETAEKHYAEHSDKPFFGELVDFITSAPLVAGIVEGESAIAAWRQLAGGTHPVEKATPGTIRGDFALTVGENVVHGSDSPESAEREIGIWFPNL</sequence>
<proteinExistence type="inferred from homology"/>
<gene>
    <name evidence="1" type="primary">ndk</name>
    <name type="ordered locus">jk0554</name>
</gene>
<accession>Q4JWU4</accession>
<reference key="1">
    <citation type="journal article" date="2005" name="J. Bacteriol.">
        <title>Complete genome sequence and analysis of the multiresistant nosocomial pathogen Corynebacterium jeikeium K411, a lipid-requiring bacterium of the human skin flora.</title>
        <authorList>
            <person name="Tauch A."/>
            <person name="Kaiser O."/>
            <person name="Hain T."/>
            <person name="Goesmann A."/>
            <person name="Weisshaar B."/>
            <person name="Albersmeier A."/>
            <person name="Bekel T."/>
            <person name="Bischoff N."/>
            <person name="Brune I."/>
            <person name="Chakraborty T."/>
            <person name="Kalinowski J."/>
            <person name="Meyer F."/>
            <person name="Rupp O."/>
            <person name="Schneiker S."/>
            <person name="Viehoever P."/>
            <person name="Puehler A."/>
        </authorList>
    </citation>
    <scope>NUCLEOTIDE SEQUENCE [LARGE SCALE GENOMIC DNA]</scope>
    <source>
        <strain>K411</strain>
    </source>
</reference>
<keyword id="KW-0067">ATP-binding</keyword>
<keyword id="KW-0963">Cytoplasm</keyword>
<keyword id="KW-0418">Kinase</keyword>
<keyword id="KW-0460">Magnesium</keyword>
<keyword id="KW-0479">Metal-binding</keyword>
<keyword id="KW-0546">Nucleotide metabolism</keyword>
<keyword id="KW-0547">Nucleotide-binding</keyword>
<keyword id="KW-0597">Phosphoprotein</keyword>
<keyword id="KW-1185">Reference proteome</keyword>
<keyword id="KW-0808">Transferase</keyword>
<evidence type="ECO:0000255" key="1">
    <source>
        <dbReference type="HAMAP-Rule" id="MF_00451"/>
    </source>
</evidence>